<comment type="function">
    <text evidence="1">Enables the recognition and targeting of unfolded and aggregated proteins to the ClpC protease or to other proteins involved in proteolysis.</text>
</comment>
<comment type="subunit">
    <text evidence="1">Homodimer.</text>
</comment>
<comment type="domain">
    <text>The N-terminal domain probably binds unfolded/aggregated proteins; the C-terminal domain interacts with ClpC.</text>
</comment>
<comment type="similarity">
    <text evidence="1">Belongs to the MecA family.</text>
</comment>
<dbReference type="EMBL" id="CP000829">
    <property type="protein sequence ID" value="ACI60580.1"/>
    <property type="molecule type" value="Genomic_DNA"/>
</dbReference>
<dbReference type="SMR" id="B5XJR8"/>
<dbReference type="KEGG" id="soz:Spy49_0240"/>
<dbReference type="HOGENOM" id="CLU_071496_1_0_9"/>
<dbReference type="Proteomes" id="UP000001039">
    <property type="component" value="Chromosome"/>
</dbReference>
<dbReference type="GO" id="GO:0030674">
    <property type="term" value="F:protein-macromolecule adaptor activity"/>
    <property type="evidence" value="ECO:0007669"/>
    <property type="project" value="UniProtKB-UniRule"/>
</dbReference>
<dbReference type="Gene3D" id="3.30.70.1950">
    <property type="match status" value="1"/>
</dbReference>
<dbReference type="HAMAP" id="MF_01124">
    <property type="entry name" value="MecA"/>
    <property type="match status" value="1"/>
</dbReference>
<dbReference type="InterPro" id="IPR038471">
    <property type="entry name" value="MecA_C_sf"/>
</dbReference>
<dbReference type="InterPro" id="IPR008681">
    <property type="entry name" value="Neg-reg_MecA"/>
</dbReference>
<dbReference type="NCBIfam" id="NF002643">
    <property type="entry name" value="PRK02315.1-4"/>
    <property type="match status" value="1"/>
</dbReference>
<dbReference type="PANTHER" id="PTHR39161">
    <property type="entry name" value="ADAPTER PROTEIN MECA"/>
    <property type="match status" value="1"/>
</dbReference>
<dbReference type="PANTHER" id="PTHR39161:SF1">
    <property type="entry name" value="ADAPTER PROTEIN MECA 1"/>
    <property type="match status" value="1"/>
</dbReference>
<dbReference type="Pfam" id="PF05389">
    <property type="entry name" value="MecA"/>
    <property type="match status" value="1"/>
</dbReference>
<dbReference type="PIRSF" id="PIRSF029008">
    <property type="entry name" value="MecA"/>
    <property type="match status" value="1"/>
</dbReference>
<name>MECA_STRPZ</name>
<feature type="chain" id="PRO_1000137286" description="Adapter protein MecA">
    <location>
        <begin position="1"/>
        <end position="253"/>
    </location>
</feature>
<protein>
    <recommendedName>
        <fullName evidence="1">Adapter protein MecA</fullName>
    </recommendedName>
</protein>
<accession>B5XJR8</accession>
<evidence type="ECO:0000255" key="1">
    <source>
        <dbReference type="HAMAP-Rule" id="MF_01124"/>
    </source>
</evidence>
<reference key="1">
    <citation type="journal article" date="2008" name="J. Bacteriol.">
        <title>Genome sequence of a nephritogenic and highly transformable M49 strain of Streptococcus pyogenes.</title>
        <authorList>
            <person name="McShan W.M."/>
            <person name="Ferretti J.J."/>
            <person name="Karasawa T."/>
            <person name="Suvorov A.N."/>
            <person name="Lin S."/>
            <person name="Qin B."/>
            <person name="Jia H."/>
            <person name="Kenton S."/>
            <person name="Najar F."/>
            <person name="Wu H."/>
            <person name="Scott J."/>
            <person name="Roe B.A."/>
            <person name="Savic D.J."/>
        </authorList>
    </citation>
    <scope>NUCLEOTIDE SEQUENCE [LARGE SCALE GENOMIC DNA]</scope>
    <source>
        <strain>NZ131</strain>
    </source>
</reference>
<proteinExistence type="inferred from homology"/>
<organism>
    <name type="scientific">Streptococcus pyogenes serotype M49 (strain NZ131)</name>
    <dbReference type="NCBI Taxonomy" id="471876"/>
    <lineage>
        <taxon>Bacteria</taxon>
        <taxon>Bacillati</taxon>
        <taxon>Bacillota</taxon>
        <taxon>Bacilli</taxon>
        <taxon>Lactobacillales</taxon>
        <taxon>Streptococcaceae</taxon>
        <taxon>Streptococcus</taxon>
    </lineage>
</organism>
<gene>
    <name evidence="1" type="primary">mecA</name>
    <name type="ordered locus">Spy49_0240</name>
</gene>
<sequence>MEMKQISETTLKITISMDDLEERGMELKDFLIPQEKTEEFFYSVMDELDLPDNFKDSGMLSFRVTPRKDRLDVFVTKSEINKDINLEDLAEFGDMSQMTPEDFFKSLEQSMREKGDVKAHEKLEKIEEIMEDVVEATLANQSEAADPSTNHESEPLDYVHYVLDFSTITEAVAFAKTIDFSIEASELYKGSNCYHMTILLDVQQQPSYFANVMYARLIEHANPGSKTRAYLQEHGLQLMLDGAVEQLQKIELG</sequence>